<accession>Q67T14</accession>
<organism>
    <name type="scientific">Symbiobacterium thermophilum (strain DSM 24528 / JCM 14929 / IAM 14863 / T)</name>
    <dbReference type="NCBI Taxonomy" id="292459"/>
    <lineage>
        <taxon>Bacteria</taxon>
        <taxon>Bacillati</taxon>
        <taxon>Bacillota</taxon>
        <taxon>Clostridia</taxon>
        <taxon>Eubacteriales</taxon>
        <taxon>Symbiobacteriaceae</taxon>
        <taxon>Symbiobacterium</taxon>
    </lineage>
</organism>
<keyword id="KW-0413">Isomerase</keyword>
<keyword id="KW-0460">Magnesium</keyword>
<keyword id="KW-0479">Metal-binding</keyword>
<keyword id="KW-0597">Phosphoprotein</keyword>
<keyword id="KW-1185">Reference proteome</keyword>
<evidence type="ECO:0000255" key="1">
    <source>
        <dbReference type="HAMAP-Rule" id="MF_01554"/>
    </source>
</evidence>
<comment type="function">
    <text evidence="1">Catalyzes the conversion of glucosamine-6-phosphate to glucosamine-1-phosphate.</text>
</comment>
<comment type="catalytic activity">
    <reaction evidence="1">
        <text>alpha-D-glucosamine 1-phosphate = D-glucosamine 6-phosphate</text>
        <dbReference type="Rhea" id="RHEA:23424"/>
        <dbReference type="ChEBI" id="CHEBI:58516"/>
        <dbReference type="ChEBI" id="CHEBI:58725"/>
        <dbReference type="EC" id="5.4.2.10"/>
    </reaction>
</comment>
<comment type="cofactor">
    <cofactor evidence="1">
        <name>Mg(2+)</name>
        <dbReference type="ChEBI" id="CHEBI:18420"/>
    </cofactor>
    <text evidence="1">Binds 1 Mg(2+) ion per subunit.</text>
</comment>
<comment type="PTM">
    <text evidence="1">Activated by phosphorylation.</text>
</comment>
<comment type="similarity">
    <text evidence="1">Belongs to the phosphohexose mutase family.</text>
</comment>
<gene>
    <name evidence="1" type="primary">glmM</name>
    <name type="ordered locus">STH194</name>
</gene>
<dbReference type="EC" id="5.4.2.10" evidence="1"/>
<dbReference type="EMBL" id="AP006840">
    <property type="protein sequence ID" value="BAD39179.1"/>
    <property type="molecule type" value="Genomic_DNA"/>
</dbReference>
<dbReference type="RefSeq" id="WP_011194329.1">
    <property type="nucleotide sequence ID" value="NC_006177.1"/>
</dbReference>
<dbReference type="SMR" id="Q67T14"/>
<dbReference type="STRING" id="292459.STH194"/>
<dbReference type="KEGG" id="sth:STH194"/>
<dbReference type="eggNOG" id="COG1109">
    <property type="taxonomic scope" value="Bacteria"/>
</dbReference>
<dbReference type="HOGENOM" id="CLU_016950_7_0_9"/>
<dbReference type="OrthoDB" id="9806956at2"/>
<dbReference type="Proteomes" id="UP000000417">
    <property type="component" value="Chromosome"/>
</dbReference>
<dbReference type="GO" id="GO:0005829">
    <property type="term" value="C:cytosol"/>
    <property type="evidence" value="ECO:0007669"/>
    <property type="project" value="TreeGrafter"/>
</dbReference>
<dbReference type="GO" id="GO:0000287">
    <property type="term" value="F:magnesium ion binding"/>
    <property type="evidence" value="ECO:0007669"/>
    <property type="project" value="UniProtKB-UniRule"/>
</dbReference>
<dbReference type="GO" id="GO:0008966">
    <property type="term" value="F:phosphoglucosamine mutase activity"/>
    <property type="evidence" value="ECO:0007669"/>
    <property type="project" value="UniProtKB-UniRule"/>
</dbReference>
<dbReference type="GO" id="GO:0004615">
    <property type="term" value="F:phosphomannomutase activity"/>
    <property type="evidence" value="ECO:0007669"/>
    <property type="project" value="TreeGrafter"/>
</dbReference>
<dbReference type="GO" id="GO:0005975">
    <property type="term" value="P:carbohydrate metabolic process"/>
    <property type="evidence" value="ECO:0007669"/>
    <property type="project" value="InterPro"/>
</dbReference>
<dbReference type="GO" id="GO:0009252">
    <property type="term" value="P:peptidoglycan biosynthetic process"/>
    <property type="evidence" value="ECO:0007669"/>
    <property type="project" value="TreeGrafter"/>
</dbReference>
<dbReference type="GO" id="GO:0006048">
    <property type="term" value="P:UDP-N-acetylglucosamine biosynthetic process"/>
    <property type="evidence" value="ECO:0007669"/>
    <property type="project" value="TreeGrafter"/>
</dbReference>
<dbReference type="CDD" id="cd05802">
    <property type="entry name" value="GlmM"/>
    <property type="match status" value="1"/>
</dbReference>
<dbReference type="FunFam" id="3.30.310.50:FF:000001">
    <property type="entry name" value="Phosphoglucosamine mutase"/>
    <property type="match status" value="1"/>
</dbReference>
<dbReference type="FunFam" id="3.40.120.10:FF:000001">
    <property type="entry name" value="Phosphoglucosamine mutase"/>
    <property type="match status" value="1"/>
</dbReference>
<dbReference type="FunFam" id="3.40.120.10:FF:000003">
    <property type="entry name" value="Phosphoglucosamine mutase"/>
    <property type="match status" value="1"/>
</dbReference>
<dbReference type="Gene3D" id="3.40.120.10">
    <property type="entry name" value="Alpha-D-Glucose-1,6-Bisphosphate, subunit A, domain 3"/>
    <property type="match status" value="3"/>
</dbReference>
<dbReference type="Gene3D" id="3.30.310.50">
    <property type="entry name" value="Alpha-D-phosphohexomutase, C-terminal domain"/>
    <property type="match status" value="1"/>
</dbReference>
<dbReference type="HAMAP" id="MF_01554_B">
    <property type="entry name" value="GlmM_B"/>
    <property type="match status" value="1"/>
</dbReference>
<dbReference type="InterPro" id="IPR005844">
    <property type="entry name" value="A-D-PHexomutase_a/b/a-I"/>
</dbReference>
<dbReference type="InterPro" id="IPR016055">
    <property type="entry name" value="A-D-PHexomutase_a/b/a-I/II/III"/>
</dbReference>
<dbReference type="InterPro" id="IPR005845">
    <property type="entry name" value="A-D-PHexomutase_a/b/a-II"/>
</dbReference>
<dbReference type="InterPro" id="IPR005846">
    <property type="entry name" value="A-D-PHexomutase_a/b/a-III"/>
</dbReference>
<dbReference type="InterPro" id="IPR005843">
    <property type="entry name" value="A-D-PHexomutase_C"/>
</dbReference>
<dbReference type="InterPro" id="IPR036900">
    <property type="entry name" value="A-D-PHexomutase_C_sf"/>
</dbReference>
<dbReference type="InterPro" id="IPR016066">
    <property type="entry name" value="A-D-PHexomutase_CS"/>
</dbReference>
<dbReference type="InterPro" id="IPR005841">
    <property type="entry name" value="Alpha-D-phosphohexomutase_SF"/>
</dbReference>
<dbReference type="InterPro" id="IPR006352">
    <property type="entry name" value="GlmM_bact"/>
</dbReference>
<dbReference type="InterPro" id="IPR050060">
    <property type="entry name" value="Phosphoglucosamine_mutase"/>
</dbReference>
<dbReference type="NCBIfam" id="TIGR01455">
    <property type="entry name" value="glmM"/>
    <property type="match status" value="1"/>
</dbReference>
<dbReference type="NCBIfam" id="NF008139">
    <property type="entry name" value="PRK10887.1"/>
    <property type="match status" value="1"/>
</dbReference>
<dbReference type="PANTHER" id="PTHR42946:SF1">
    <property type="entry name" value="PHOSPHOGLUCOMUTASE (ALPHA-D-GLUCOSE-1,6-BISPHOSPHATE-DEPENDENT)"/>
    <property type="match status" value="1"/>
</dbReference>
<dbReference type="PANTHER" id="PTHR42946">
    <property type="entry name" value="PHOSPHOHEXOSE MUTASE"/>
    <property type="match status" value="1"/>
</dbReference>
<dbReference type="Pfam" id="PF02878">
    <property type="entry name" value="PGM_PMM_I"/>
    <property type="match status" value="1"/>
</dbReference>
<dbReference type="Pfam" id="PF02879">
    <property type="entry name" value="PGM_PMM_II"/>
    <property type="match status" value="1"/>
</dbReference>
<dbReference type="Pfam" id="PF02880">
    <property type="entry name" value="PGM_PMM_III"/>
    <property type="match status" value="1"/>
</dbReference>
<dbReference type="Pfam" id="PF00408">
    <property type="entry name" value="PGM_PMM_IV"/>
    <property type="match status" value="1"/>
</dbReference>
<dbReference type="PRINTS" id="PR00509">
    <property type="entry name" value="PGMPMM"/>
</dbReference>
<dbReference type="SUPFAM" id="SSF55957">
    <property type="entry name" value="Phosphoglucomutase, C-terminal domain"/>
    <property type="match status" value="1"/>
</dbReference>
<dbReference type="SUPFAM" id="SSF53738">
    <property type="entry name" value="Phosphoglucomutase, first 3 domains"/>
    <property type="match status" value="3"/>
</dbReference>
<dbReference type="PROSITE" id="PS00710">
    <property type="entry name" value="PGM_PMM"/>
    <property type="match status" value="1"/>
</dbReference>
<reference key="1">
    <citation type="journal article" date="2004" name="Nucleic Acids Res.">
        <title>Genome sequence of Symbiobacterium thermophilum, an uncultivable bacterium that depends on microbial commensalism.</title>
        <authorList>
            <person name="Ueda K."/>
            <person name="Yamashita A."/>
            <person name="Ishikawa J."/>
            <person name="Shimada M."/>
            <person name="Watsuji T."/>
            <person name="Morimura K."/>
            <person name="Ikeda H."/>
            <person name="Hattori M."/>
            <person name="Beppu T."/>
        </authorList>
    </citation>
    <scope>NUCLEOTIDE SEQUENCE [LARGE SCALE GENOMIC DNA]</scope>
    <source>
        <strain>DSM 24528 / JCM 14929 / IAM 14863 / T</strain>
    </source>
</reference>
<protein>
    <recommendedName>
        <fullName evidence="1">Phosphoglucosamine mutase</fullName>
        <ecNumber evidence="1">5.4.2.10</ecNumber>
    </recommendedName>
</protein>
<proteinExistence type="inferred from homology"/>
<sequence length="447" mass="47198">MPRMFGTDGVRGVANTEDLSPELAFALGRAAATLARERSGGRVVGVIGRDTRRSGPMLAAALSAGICSAGGDVVDLGVITTPGVAYVTTHLKADFGVMISASHNPAPDNGIKFFSGDGYKLPDEVEDQLEALVKARPDTMPRPTGAELGSIRQSPEAVEAYVEHLVSTGSPLSGLRVVVDCGHGAAYRLSPEVLRRLGAEVIALNTAPDGLNINAGCGSTHPEALQEAVRAHGADAGIAHDGDADRCIAVDERGELVDGDQIMAICALDLKARGQLPNDTLVTTVMSNMGLEMLMRRHGIRLVRTKVGDRYVLEEMLKGGHGLGGEQSGHVIFGALSTTGDGILTAVQLLSIVAREKQPLSTLAGRMQRLPQWLENVRVGRKEGWEQNQAIQAAIARAEAEMAGQGRVLVRASGTEPLIRVMLEGTDMAHIQRLAASIAEVIRTELQ</sequence>
<feature type="chain" id="PRO_0000147984" description="Phosphoglucosamine mutase">
    <location>
        <begin position="1"/>
        <end position="447"/>
    </location>
</feature>
<feature type="active site" description="Phosphoserine intermediate" evidence="1">
    <location>
        <position position="102"/>
    </location>
</feature>
<feature type="binding site" description="via phosphate group" evidence="1">
    <location>
        <position position="102"/>
    </location>
    <ligand>
        <name>Mg(2+)</name>
        <dbReference type="ChEBI" id="CHEBI:18420"/>
    </ligand>
</feature>
<feature type="binding site" evidence="1">
    <location>
        <position position="241"/>
    </location>
    <ligand>
        <name>Mg(2+)</name>
        <dbReference type="ChEBI" id="CHEBI:18420"/>
    </ligand>
</feature>
<feature type="binding site" evidence="1">
    <location>
        <position position="243"/>
    </location>
    <ligand>
        <name>Mg(2+)</name>
        <dbReference type="ChEBI" id="CHEBI:18420"/>
    </ligand>
</feature>
<feature type="binding site" evidence="1">
    <location>
        <position position="245"/>
    </location>
    <ligand>
        <name>Mg(2+)</name>
        <dbReference type="ChEBI" id="CHEBI:18420"/>
    </ligand>
</feature>
<feature type="modified residue" description="Phosphoserine" evidence="1">
    <location>
        <position position="102"/>
    </location>
</feature>
<name>GLMM_SYMTH</name>